<evidence type="ECO:0000250" key="1"/>
<evidence type="ECO:0000255" key="2">
    <source>
        <dbReference type="HAMAP-Rule" id="MF_00606"/>
    </source>
</evidence>
<proteinExistence type="inferred from homology"/>
<dbReference type="EC" id="3.-.-.-" evidence="2"/>
<dbReference type="EMBL" id="CP001186">
    <property type="protein sequence ID" value="ACK93488.1"/>
    <property type="molecule type" value="Genomic_DNA"/>
</dbReference>
<dbReference type="RefSeq" id="WP_014895365.1">
    <property type="nucleotide sequence ID" value="NC_011772.1"/>
</dbReference>
<dbReference type="SMR" id="B7IR00"/>
<dbReference type="KEGG" id="bcg:BCG9842_B5482"/>
<dbReference type="HOGENOM" id="CLU_017168_0_1_9"/>
<dbReference type="Proteomes" id="UP000006744">
    <property type="component" value="Chromosome"/>
</dbReference>
<dbReference type="GO" id="GO:0004519">
    <property type="term" value="F:endonuclease activity"/>
    <property type="evidence" value="ECO:0007669"/>
    <property type="project" value="UniProtKB-UniRule"/>
</dbReference>
<dbReference type="GO" id="GO:0006289">
    <property type="term" value="P:nucleotide-excision repair"/>
    <property type="evidence" value="ECO:0007669"/>
    <property type="project" value="InterPro"/>
</dbReference>
<dbReference type="GO" id="GO:0006290">
    <property type="term" value="P:pyrimidine dimer repair"/>
    <property type="evidence" value="ECO:0007669"/>
    <property type="project" value="UniProtKB-UniRule"/>
</dbReference>
<dbReference type="GO" id="GO:0009411">
    <property type="term" value="P:response to UV"/>
    <property type="evidence" value="ECO:0007669"/>
    <property type="project" value="InterPro"/>
</dbReference>
<dbReference type="Gene3D" id="3.20.20.150">
    <property type="entry name" value="Divalent-metal-dependent TIM barrel enzymes"/>
    <property type="match status" value="1"/>
</dbReference>
<dbReference type="HAMAP" id="MF_00606">
    <property type="entry name" value="UV_endonuclease"/>
    <property type="match status" value="1"/>
</dbReference>
<dbReference type="InterPro" id="IPR004601">
    <property type="entry name" value="UvdE"/>
</dbReference>
<dbReference type="InterPro" id="IPR023520">
    <property type="entry name" value="UvdE_bac"/>
</dbReference>
<dbReference type="InterPro" id="IPR036237">
    <property type="entry name" value="Xyl_isomerase-like_sf"/>
</dbReference>
<dbReference type="NCBIfam" id="TIGR00629">
    <property type="entry name" value="uvde"/>
    <property type="match status" value="1"/>
</dbReference>
<dbReference type="PANTHER" id="PTHR31290">
    <property type="entry name" value="UV-DAMAGE ENDONUCLEASE"/>
    <property type="match status" value="1"/>
</dbReference>
<dbReference type="PANTHER" id="PTHR31290:SF5">
    <property type="entry name" value="UV-DAMAGE ENDONUCLEASE"/>
    <property type="match status" value="1"/>
</dbReference>
<dbReference type="Pfam" id="PF03851">
    <property type="entry name" value="UvdE"/>
    <property type="match status" value="1"/>
</dbReference>
<dbReference type="SUPFAM" id="SSF51658">
    <property type="entry name" value="Xylose isomerase-like"/>
    <property type="match status" value="1"/>
</dbReference>
<comment type="function">
    <text evidence="1">Component in a DNA repair pathway. Removal of UV LIGHT damaged nucleotides. Recognizes pyrimidine dimers and cleave a phosphodiester bond immediately 5' to the lesion (By similarity).</text>
</comment>
<comment type="similarity">
    <text evidence="2">Belongs to the uve1/UvsE family.</text>
</comment>
<accession>B7IR00</accession>
<gene>
    <name evidence="2" type="primary">uvsE</name>
    <name type="ordered locus">BCG9842_B5482</name>
</gene>
<organism>
    <name type="scientific">Bacillus cereus (strain G9842)</name>
    <dbReference type="NCBI Taxonomy" id="405531"/>
    <lineage>
        <taxon>Bacteria</taxon>
        <taxon>Bacillati</taxon>
        <taxon>Bacillota</taxon>
        <taxon>Bacilli</taxon>
        <taxon>Bacillales</taxon>
        <taxon>Bacillaceae</taxon>
        <taxon>Bacillus</taxon>
        <taxon>Bacillus cereus group</taxon>
    </lineage>
</organism>
<keyword id="KW-0227">DNA damage</keyword>
<keyword id="KW-0228">DNA excision</keyword>
<keyword id="KW-0234">DNA repair</keyword>
<keyword id="KW-0255">Endonuclease</keyword>
<keyword id="KW-0378">Hydrolase</keyword>
<keyword id="KW-0540">Nuclease</keyword>
<protein>
    <recommendedName>
        <fullName evidence="2">UV DNA damage endonuclease</fullName>
        <shortName evidence="2">UV-endonuclease</shortName>
        <shortName evidence="2">UVED</shortName>
        <ecNumber evidence="2">3.-.-.-</ecNumber>
    </recommendedName>
</protein>
<feature type="chain" id="PRO_1000130230" description="UV DNA damage endonuclease">
    <location>
        <begin position="1"/>
        <end position="317"/>
    </location>
</feature>
<reference key="1">
    <citation type="submission" date="2008-10" db="EMBL/GenBank/DDBJ databases">
        <title>Genome sequence of Bacillus cereus G9842.</title>
        <authorList>
            <person name="Dodson R.J."/>
            <person name="Durkin A.S."/>
            <person name="Rosovitz M.J."/>
            <person name="Rasko D.A."/>
            <person name="Hoffmaster A."/>
            <person name="Ravel J."/>
            <person name="Sutton G."/>
        </authorList>
    </citation>
    <scope>NUCLEOTIDE SEQUENCE [LARGE SCALE GENOMIC DNA]</scope>
    <source>
        <strain>G9842</strain>
    </source>
</reference>
<name>UVSE_BACC2</name>
<sequence length="317" mass="36985">MIMRFGYVSHAMALWDCSPAKTMTFTSFKKLSKQEREDKLYHVIRQNLEHTIRILHYNIAHEIPLYRLSSSIVPLATHPEVEFDYIGVFTPLWRKIGALIKEHNLRISFHPNQFTLFTSDKPHITTNAITDMTYHYKILDAIGIADSSYINIHVGGAYGNKEKAIERFHENIKKLPAHIKKQMTLENDDKTYTTSETLSICQKENIPFVFDYHHHMANLCEQPLEELLPAIFETWSHTNISPKVHISSPRSEKEFRAHAEYIDLEFIKPFLHVAKKNNHNFDIMIESKQKDLALFRLIDELSAIRGIKRISGAMLQW</sequence>